<reference key="1">
    <citation type="journal article" date="2005" name="Nature">
        <title>The map-based sequence of the rice genome.</title>
        <authorList>
            <consortium name="International rice genome sequencing project (IRGSP)"/>
        </authorList>
    </citation>
    <scope>NUCLEOTIDE SEQUENCE [LARGE SCALE GENOMIC DNA]</scope>
    <source>
        <strain>cv. Nipponbare</strain>
    </source>
</reference>
<reference key="2">
    <citation type="journal article" date="2008" name="Nucleic Acids Res.">
        <title>The rice annotation project database (RAP-DB): 2008 update.</title>
        <authorList>
            <consortium name="The rice annotation project (RAP)"/>
        </authorList>
    </citation>
    <scope>GENOME REANNOTATION</scope>
    <source>
        <strain>cv. Nipponbare</strain>
    </source>
</reference>
<reference key="3">
    <citation type="journal article" date="2013" name="Rice">
        <title>Improvement of the Oryza sativa Nipponbare reference genome using next generation sequence and optical map data.</title>
        <authorList>
            <person name="Kawahara Y."/>
            <person name="de la Bastide M."/>
            <person name="Hamilton J.P."/>
            <person name="Kanamori H."/>
            <person name="McCombie W.R."/>
            <person name="Ouyang S."/>
            <person name="Schwartz D.C."/>
            <person name="Tanaka T."/>
            <person name="Wu J."/>
            <person name="Zhou S."/>
            <person name="Childs K.L."/>
            <person name="Davidson R.M."/>
            <person name="Lin H."/>
            <person name="Quesada-Ocampo L."/>
            <person name="Vaillancourt B."/>
            <person name="Sakai H."/>
            <person name="Lee S.S."/>
            <person name="Kim J."/>
            <person name="Numa H."/>
            <person name="Itoh T."/>
            <person name="Buell C.R."/>
            <person name="Matsumoto T."/>
        </authorList>
    </citation>
    <scope>GENOME REANNOTATION</scope>
    <source>
        <strain>cv. Nipponbare</strain>
    </source>
</reference>
<reference key="4">
    <citation type="journal article" date="2003" name="Science">
        <title>Collection, mapping, and annotation of over 28,000 cDNA clones from japonica rice.</title>
        <authorList>
            <consortium name="The rice full-length cDNA consortium"/>
        </authorList>
    </citation>
    <scope>NUCLEOTIDE SEQUENCE [LARGE SCALE MRNA] (ISOFORMS 1 AND 2)</scope>
    <source>
        <strain>cv. Nipponbare</strain>
    </source>
</reference>
<reference key="5">
    <citation type="journal article" date="2008" name="Mol. Plant">
        <title>Classification, expression pattern, and E3 ligase activity assay of rice U-box-containing proteins.</title>
        <authorList>
            <person name="Zeng L.R."/>
            <person name="Park C.H."/>
            <person name="Venu R.C."/>
            <person name="Gough J."/>
            <person name="Wang G.L."/>
        </authorList>
    </citation>
    <scope>FUNCTION</scope>
    <scope>GENE FAMILY</scope>
    <scope>NOMENCLATURE</scope>
</reference>
<comment type="function">
    <text evidence="1">Possesses E3 ubiquitin-protein ligase in vitro.</text>
</comment>
<comment type="catalytic activity">
    <reaction>
        <text>S-ubiquitinyl-[E2 ubiquitin-conjugating enzyme]-L-cysteine + [acceptor protein]-L-lysine = [E2 ubiquitin-conjugating enzyme]-L-cysteine + N(6)-ubiquitinyl-[acceptor protein]-L-lysine.</text>
        <dbReference type="EC" id="2.3.2.27"/>
    </reaction>
</comment>
<comment type="pathway">
    <text>Protein modification; protein ubiquitination.</text>
</comment>
<comment type="alternative products">
    <event type="alternative splicing"/>
    <isoform>
        <id>Q5VRH9-1</id>
        <name>1</name>
        <sequence type="displayed"/>
    </isoform>
    <isoform>
        <id>Q5VRH9-2</id>
        <name>2</name>
        <sequence type="described" ref="VSP_039692"/>
    </isoform>
</comment>
<dbReference type="EC" id="2.3.2.27"/>
<dbReference type="EMBL" id="AP002842">
    <property type="protein sequence ID" value="BAD67946.1"/>
    <property type="molecule type" value="Genomic_DNA"/>
</dbReference>
<dbReference type="EMBL" id="AP002842">
    <property type="protein sequence ID" value="BAD67947.1"/>
    <property type="molecule type" value="Genomic_DNA"/>
</dbReference>
<dbReference type="EMBL" id="AP008212">
    <property type="protein sequence ID" value="BAF18449.2"/>
    <property type="molecule type" value="Genomic_DNA"/>
</dbReference>
<dbReference type="EMBL" id="AP014962">
    <property type="protein sequence ID" value="BAS95707.1"/>
    <property type="molecule type" value="Genomic_DNA"/>
</dbReference>
<dbReference type="EMBL" id="AK067611">
    <property type="protein sequence ID" value="BAG90500.1"/>
    <property type="molecule type" value="mRNA"/>
</dbReference>
<dbReference type="EMBL" id="AK071080">
    <property type="status" value="NOT_ANNOTATED_CDS"/>
    <property type="molecule type" value="mRNA"/>
</dbReference>
<dbReference type="RefSeq" id="XP_015643776.1">
    <property type="nucleotide sequence ID" value="XM_015788290.1"/>
</dbReference>
<dbReference type="RefSeq" id="XP_015643777.1">
    <property type="nucleotide sequence ID" value="XM_015788291.1"/>
</dbReference>
<dbReference type="PDB" id="7XED">
    <property type="method" value="X-ray"/>
    <property type="resolution" value="2.50 A"/>
    <property type="chains" value="C/D=227-303"/>
</dbReference>
<dbReference type="PDB" id="8HPB">
    <property type="method" value="NMR"/>
    <property type="chains" value="A/B=227-303"/>
</dbReference>
<dbReference type="PDB" id="8HQB">
    <property type="method" value="NMR"/>
    <property type="chains" value="A/B=227-303"/>
</dbReference>
<dbReference type="PDBsum" id="7XED"/>
<dbReference type="PDBsum" id="8HPB"/>
<dbReference type="PDBsum" id="8HQB"/>
<dbReference type="SMR" id="Q5VRH9"/>
<dbReference type="FunCoup" id="Q5VRH9">
    <property type="interactions" value="2081"/>
</dbReference>
<dbReference type="STRING" id="39947.Q5VRH9"/>
<dbReference type="PaxDb" id="39947-Q5VRH9"/>
<dbReference type="KEGG" id="dosa:Os06g0102700"/>
<dbReference type="eggNOG" id="KOG0167">
    <property type="taxonomic scope" value="Eukaryota"/>
</dbReference>
<dbReference type="HOGENOM" id="CLU_006348_5_1_1"/>
<dbReference type="InParanoid" id="Q5VRH9"/>
<dbReference type="OMA" id="DSHAIPK"/>
<dbReference type="OrthoDB" id="7537227at2759"/>
<dbReference type="UniPathway" id="UPA00143"/>
<dbReference type="Proteomes" id="UP000000763">
    <property type="component" value="Chromosome 6"/>
</dbReference>
<dbReference type="Proteomes" id="UP000059680">
    <property type="component" value="Chromosome 6"/>
</dbReference>
<dbReference type="GO" id="GO:0005737">
    <property type="term" value="C:cytoplasm"/>
    <property type="evidence" value="ECO:0000318"/>
    <property type="project" value="GO_Central"/>
</dbReference>
<dbReference type="GO" id="GO:0005634">
    <property type="term" value="C:nucleus"/>
    <property type="evidence" value="ECO:0000318"/>
    <property type="project" value="GO_Central"/>
</dbReference>
<dbReference type="GO" id="GO:0004842">
    <property type="term" value="F:ubiquitin-protein transferase activity"/>
    <property type="evidence" value="ECO:0000314"/>
    <property type="project" value="UniProtKB"/>
</dbReference>
<dbReference type="GO" id="GO:0016567">
    <property type="term" value="P:protein ubiquitination"/>
    <property type="evidence" value="ECO:0000314"/>
    <property type="project" value="UniProtKB"/>
</dbReference>
<dbReference type="CDD" id="cd16664">
    <property type="entry name" value="RING-Ubox_PUB"/>
    <property type="match status" value="1"/>
</dbReference>
<dbReference type="FunFam" id="1.25.10.10:FF:000082">
    <property type="entry name" value="RING-type E3 ubiquitin transferase"/>
    <property type="match status" value="1"/>
</dbReference>
<dbReference type="FunFam" id="3.30.40.10:FF:000114">
    <property type="entry name" value="RING-type E3 ubiquitin transferase"/>
    <property type="match status" value="1"/>
</dbReference>
<dbReference type="Gene3D" id="1.25.10.10">
    <property type="entry name" value="Leucine-rich Repeat Variant"/>
    <property type="match status" value="1"/>
</dbReference>
<dbReference type="Gene3D" id="3.30.40.10">
    <property type="entry name" value="Zinc/RING finger domain, C3HC4 (zinc finger)"/>
    <property type="match status" value="1"/>
</dbReference>
<dbReference type="InterPro" id="IPR011989">
    <property type="entry name" value="ARM-like"/>
</dbReference>
<dbReference type="InterPro" id="IPR016024">
    <property type="entry name" value="ARM-type_fold"/>
</dbReference>
<dbReference type="InterPro" id="IPR000225">
    <property type="entry name" value="Armadillo"/>
</dbReference>
<dbReference type="InterPro" id="IPR045210">
    <property type="entry name" value="RING-Ubox_PUB"/>
</dbReference>
<dbReference type="InterPro" id="IPR003613">
    <property type="entry name" value="Ubox_domain"/>
</dbReference>
<dbReference type="InterPro" id="IPR013083">
    <property type="entry name" value="Znf_RING/FYVE/PHD"/>
</dbReference>
<dbReference type="PANTHER" id="PTHR23315">
    <property type="entry name" value="U BOX DOMAIN-CONTAINING"/>
    <property type="match status" value="1"/>
</dbReference>
<dbReference type="PANTHER" id="PTHR23315:SF111">
    <property type="entry name" value="U-BOX DOMAIN-CONTAINING PROTEIN 14"/>
    <property type="match status" value="1"/>
</dbReference>
<dbReference type="Pfam" id="PF00514">
    <property type="entry name" value="Arm"/>
    <property type="match status" value="3"/>
</dbReference>
<dbReference type="Pfam" id="PF25368">
    <property type="entry name" value="PUB10_N"/>
    <property type="match status" value="1"/>
</dbReference>
<dbReference type="Pfam" id="PF04564">
    <property type="entry name" value="U-box"/>
    <property type="match status" value="1"/>
</dbReference>
<dbReference type="SMART" id="SM00185">
    <property type="entry name" value="ARM"/>
    <property type="match status" value="5"/>
</dbReference>
<dbReference type="SMART" id="SM00504">
    <property type="entry name" value="Ubox"/>
    <property type="match status" value="1"/>
</dbReference>
<dbReference type="SUPFAM" id="SSF48371">
    <property type="entry name" value="ARM repeat"/>
    <property type="match status" value="1"/>
</dbReference>
<dbReference type="SUPFAM" id="SSF57850">
    <property type="entry name" value="RING/U-box"/>
    <property type="match status" value="1"/>
</dbReference>
<dbReference type="PROSITE" id="PS50176">
    <property type="entry name" value="ARM_REPEAT"/>
    <property type="match status" value="1"/>
</dbReference>
<dbReference type="PROSITE" id="PS51698">
    <property type="entry name" value="U_BOX"/>
    <property type="match status" value="1"/>
</dbReference>
<proteinExistence type="evidence at protein level"/>
<accession>Q5VRH9</accession>
<accession>Q5VRH8</accession>
<gene>
    <name type="primary">PUB12</name>
    <name type="ordered locus">Os06g0102700</name>
    <name type="ordered locus">LOC_Os06g01304</name>
    <name type="ORF">OSJNBa0075G19.19-1</name>
</gene>
<organism>
    <name type="scientific">Oryza sativa subsp. japonica</name>
    <name type="common">Rice</name>
    <dbReference type="NCBI Taxonomy" id="39947"/>
    <lineage>
        <taxon>Eukaryota</taxon>
        <taxon>Viridiplantae</taxon>
        <taxon>Streptophyta</taxon>
        <taxon>Embryophyta</taxon>
        <taxon>Tracheophyta</taxon>
        <taxon>Spermatophyta</taxon>
        <taxon>Magnoliopsida</taxon>
        <taxon>Liliopsida</taxon>
        <taxon>Poales</taxon>
        <taxon>Poaceae</taxon>
        <taxon>BOP clade</taxon>
        <taxon>Oryzoideae</taxon>
        <taxon>Oryzeae</taxon>
        <taxon>Oryzinae</taxon>
        <taxon>Oryza</taxon>
        <taxon>Oryza sativa</taxon>
    </lineage>
</organism>
<name>PUB12_ORYSJ</name>
<keyword id="KW-0002">3D-structure</keyword>
<keyword id="KW-0025">Alternative splicing</keyword>
<keyword id="KW-1185">Reference proteome</keyword>
<keyword id="KW-0677">Repeat</keyword>
<keyword id="KW-0808">Transferase</keyword>
<keyword id="KW-0833">Ubl conjugation pathway</keyword>
<feature type="chain" id="PRO_0000397690" description="U-box domain-containing protein 12">
    <location>
        <begin position="1"/>
        <end position="611"/>
    </location>
</feature>
<feature type="domain" description="U-box">
    <location>
        <begin position="227"/>
        <end position="301"/>
    </location>
</feature>
<feature type="repeat" description="ARM 1">
    <location>
        <begin position="355"/>
        <end position="394"/>
    </location>
</feature>
<feature type="repeat" description="ARM 2">
    <location>
        <begin position="396"/>
        <end position="435"/>
    </location>
</feature>
<feature type="repeat" description="ARM 3">
    <location>
        <begin position="437"/>
        <end position="476"/>
    </location>
</feature>
<feature type="repeat" description="ARM 4">
    <location>
        <begin position="478"/>
        <end position="517"/>
    </location>
</feature>
<feature type="splice variant" id="VSP_039692" description="In isoform 2." evidence="2">
    <original>DSLKGNGH</original>
    <variation>A</variation>
    <location>
        <begin position="604"/>
        <end position="611"/>
    </location>
</feature>
<feature type="sequence conflict" description="In Ref. 4; AK071080." evidence="3" ref="4">
    <original>L</original>
    <variation>I</variation>
    <location>
        <position position="62"/>
    </location>
</feature>
<feature type="helix" evidence="4">
    <location>
        <begin position="230"/>
        <end position="232"/>
    </location>
</feature>
<feature type="turn" evidence="4">
    <location>
        <begin position="235"/>
        <end position="237"/>
    </location>
</feature>
<feature type="strand" evidence="4">
    <location>
        <begin position="242"/>
        <end position="246"/>
    </location>
</feature>
<feature type="strand" evidence="4">
    <location>
        <begin position="252"/>
        <end position="254"/>
    </location>
</feature>
<feature type="helix" evidence="4">
    <location>
        <begin position="255"/>
        <end position="263"/>
    </location>
</feature>
<feature type="turn" evidence="4">
    <location>
        <begin position="270"/>
        <end position="272"/>
    </location>
</feature>
<feature type="helix" evidence="4">
    <location>
        <begin position="285"/>
        <end position="297"/>
    </location>
</feature>
<protein>
    <recommendedName>
        <fullName>U-box domain-containing protein 12</fullName>
        <ecNumber>2.3.2.27</ecNumber>
    </recommendedName>
    <alternativeName>
        <fullName>Plant U-box protein 12</fullName>
        <shortName>OsPUB12</shortName>
    </alternativeName>
    <alternativeName>
        <fullName evidence="3">RING-type E3 ubiquitin transferase PUB12</fullName>
    </alternativeName>
</protein>
<sequence length="611" mass="66241">MPKRVADEIAALPEPRGPLRRPCADLSRRVRLLAPLLDHLPASSSSSSSTPLADALGAARDLLRKTRDGSKIDQAMRGDAFLDEFAGVNRQIHLALDALPYNTFHMPQEVQEQVALVHSQFQRASTRTDPPDTQLSMDLAWALTDNPSDPALLTRISHKLQLHTMADMKNESIALHNMVISTAGEPDGCVDQMSSLLKKLKDCVVTEDHANDALTTRSASIKHRSPIIPDEFRCPISLELMQDPVIVSSGQTYERSCIQKWLDSGHKTCPKTQQPLSHTSLTPNFVLKSLISQWCEANGIELPKNKQNSRDKKAAKSSDYDHAGLVSLMNRLRSGNQDEQRAAAGEIRLLAKRNVNNRICIAEAGAIPLLVNLLSSSDPRTQEHAVTALLNLSIHENNKASIVDSHAIPKIVEVLKTGSMETRENAAATLFSLSVVDENKVTIGAAGAIPPLINLLCDGSPRGKKDAATAIFNLCIYQGNKVRAVKAGIVIHLMNFLVDPTGGMIDEALSLLSILAGNPEGKIVIARSEPIPPLVEVIKTGSPRNRENAAAILWLLCSADTEQTLAAKAAGVEDALKELSETGTDRAKRKASSILELMHQANEDSLKGNGH</sequence>
<evidence type="ECO:0000269" key="1">
    <source>
    </source>
</evidence>
<evidence type="ECO:0000303" key="2">
    <source>
    </source>
</evidence>
<evidence type="ECO:0000305" key="3"/>
<evidence type="ECO:0007829" key="4">
    <source>
        <dbReference type="PDB" id="7XED"/>
    </source>
</evidence>